<name>NEPI_SALCH</name>
<organism>
    <name type="scientific">Salmonella choleraesuis (strain SC-B67)</name>
    <dbReference type="NCBI Taxonomy" id="321314"/>
    <lineage>
        <taxon>Bacteria</taxon>
        <taxon>Pseudomonadati</taxon>
        <taxon>Pseudomonadota</taxon>
        <taxon>Gammaproteobacteria</taxon>
        <taxon>Enterobacterales</taxon>
        <taxon>Enterobacteriaceae</taxon>
        <taxon>Salmonella</taxon>
    </lineage>
</organism>
<gene>
    <name evidence="1" type="primary">nepI</name>
    <name type="ordered locus">SCH_3695.1</name>
</gene>
<feature type="chain" id="PRO_0000294113" description="Purine ribonucleoside efflux pump NepI">
    <location>
        <begin position="1"/>
        <end position="397"/>
    </location>
</feature>
<feature type="topological domain" description="Cytoplasmic" evidence="1">
    <location>
        <begin position="1"/>
        <end position="21"/>
    </location>
</feature>
<feature type="transmembrane region" description="Helical" evidence="1">
    <location>
        <begin position="22"/>
        <end position="42"/>
    </location>
</feature>
<feature type="topological domain" description="Periplasmic" evidence="1">
    <location>
        <begin position="43"/>
        <end position="54"/>
    </location>
</feature>
<feature type="transmembrane region" description="Helical" evidence="1">
    <location>
        <begin position="55"/>
        <end position="75"/>
    </location>
</feature>
<feature type="topological domain" description="Cytoplasmic" evidence="1">
    <location>
        <begin position="76"/>
        <end position="85"/>
    </location>
</feature>
<feature type="transmembrane region" description="Helical" evidence="1">
    <location>
        <begin position="86"/>
        <end position="106"/>
    </location>
</feature>
<feature type="topological domain" description="Periplasmic" evidence="1">
    <location>
        <position position="107"/>
    </location>
</feature>
<feature type="transmembrane region" description="Helical" evidence="1">
    <location>
        <begin position="108"/>
        <end position="128"/>
    </location>
</feature>
<feature type="topological domain" description="Cytoplasmic" evidence="1">
    <location>
        <begin position="129"/>
        <end position="147"/>
    </location>
</feature>
<feature type="transmembrane region" description="Helical" evidence="1">
    <location>
        <begin position="148"/>
        <end position="168"/>
    </location>
</feature>
<feature type="topological domain" description="Periplasmic" evidence="1">
    <location>
        <begin position="169"/>
        <end position="175"/>
    </location>
</feature>
<feature type="transmembrane region" description="Helical" evidence="1">
    <location>
        <begin position="176"/>
        <end position="196"/>
    </location>
</feature>
<feature type="topological domain" description="Cytoplasmic" evidence="1">
    <location>
        <begin position="197"/>
        <end position="215"/>
    </location>
</feature>
<feature type="transmembrane region" description="Helical" evidence="1">
    <location>
        <begin position="216"/>
        <end position="236"/>
    </location>
</feature>
<feature type="topological domain" description="Periplasmic" evidence="1">
    <location>
        <begin position="237"/>
        <end position="255"/>
    </location>
</feature>
<feature type="transmembrane region" description="Helical" evidence="1">
    <location>
        <begin position="256"/>
        <end position="276"/>
    </location>
</feature>
<feature type="topological domain" description="Cytoplasmic" evidence="1">
    <location>
        <begin position="277"/>
        <end position="281"/>
    </location>
</feature>
<feature type="transmembrane region" description="Helical" evidence="1">
    <location>
        <begin position="282"/>
        <end position="302"/>
    </location>
</feature>
<feature type="topological domain" description="Periplasmic" evidence="1">
    <location>
        <begin position="303"/>
        <end position="305"/>
    </location>
</feature>
<feature type="transmembrane region" description="Helical" evidence="1">
    <location>
        <begin position="306"/>
        <end position="326"/>
    </location>
</feature>
<feature type="topological domain" description="Cytoplasmic" evidence="1">
    <location>
        <begin position="327"/>
        <end position="343"/>
    </location>
</feature>
<feature type="transmembrane region" description="Helical" evidence="1">
    <location>
        <begin position="344"/>
        <end position="364"/>
    </location>
</feature>
<feature type="topological domain" description="Periplasmic" evidence="1">
    <location>
        <begin position="365"/>
        <end position="366"/>
    </location>
</feature>
<feature type="transmembrane region" description="Helical" evidence="1">
    <location>
        <begin position="367"/>
        <end position="387"/>
    </location>
</feature>
<feature type="topological domain" description="Cytoplasmic" evidence="1">
    <location>
        <begin position="388"/>
        <end position="397"/>
    </location>
</feature>
<reference key="1">
    <citation type="journal article" date="2005" name="Nucleic Acids Res.">
        <title>The genome sequence of Salmonella enterica serovar Choleraesuis, a highly invasive and resistant zoonotic pathogen.</title>
        <authorList>
            <person name="Chiu C.-H."/>
            <person name="Tang P."/>
            <person name="Chu C."/>
            <person name="Hu S."/>
            <person name="Bao Q."/>
            <person name="Yu J."/>
            <person name="Chou Y.-Y."/>
            <person name="Wang H.-S."/>
            <person name="Lee Y.-S."/>
        </authorList>
    </citation>
    <scope>NUCLEOTIDE SEQUENCE [LARGE SCALE GENOMIC DNA]</scope>
    <source>
        <strain>SC-B67</strain>
    </source>
</reference>
<comment type="function">
    <text evidence="1">Involved in the efflux of purine ribonucleosides, such as inosine and guanosine.</text>
</comment>
<comment type="catalytic activity">
    <reaction evidence="1">
        <text>inosine(in) + H(+)(out) = inosine(out) + H(+)(in)</text>
        <dbReference type="Rhea" id="RHEA:29211"/>
        <dbReference type="ChEBI" id="CHEBI:15378"/>
        <dbReference type="ChEBI" id="CHEBI:17596"/>
    </reaction>
    <physiologicalReaction direction="left-to-right" evidence="1">
        <dbReference type="Rhea" id="RHEA:29212"/>
    </physiologicalReaction>
</comment>
<comment type="catalytic activity">
    <reaction evidence="1">
        <text>guanosine(in) + H(+)(out) = guanosine(out) + H(+)(in)</text>
        <dbReference type="Rhea" id="RHEA:29583"/>
        <dbReference type="ChEBI" id="CHEBI:15378"/>
        <dbReference type="ChEBI" id="CHEBI:16750"/>
    </reaction>
    <physiologicalReaction direction="left-to-right" evidence="1">
        <dbReference type="Rhea" id="RHEA:29584"/>
    </physiologicalReaction>
</comment>
<comment type="subcellular location">
    <subcellularLocation>
        <location evidence="1">Cell inner membrane</location>
        <topology evidence="1">Multi-pass membrane protein</topology>
    </subcellularLocation>
</comment>
<comment type="similarity">
    <text evidence="1">Belongs to the major facilitator superfamily. DHA1 family. NepI (TC 2.A.1.2.26) subfamily.</text>
</comment>
<protein>
    <recommendedName>
        <fullName evidence="1">Purine ribonucleoside efflux pump NepI</fullName>
    </recommendedName>
</protein>
<proteinExistence type="inferred from homology"/>
<keyword id="KW-0050">Antiport</keyword>
<keyword id="KW-0997">Cell inner membrane</keyword>
<keyword id="KW-1003">Cell membrane</keyword>
<keyword id="KW-0472">Membrane</keyword>
<keyword id="KW-0812">Transmembrane</keyword>
<keyword id="KW-1133">Transmembrane helix</keyword>
<keyword id="KW-0813">Transport</keyword>
<evidence type="ECO:0000255" key="1">
    <source>
        <dbReference type="HAMAP-Rule" id="MF_01189"/>
    </source>
</evidence>
<sequence>MNENIAEKFRADGVARPNWSAVFAVAFCVACLITVEFLPVSLLTPMAQDLGISEGVAGQSVTVTAFVAMFSSLFITQIIQATDRRYIVILFAVLLTASCLMVSFANSFTLLLLGRACLGLALGGFWAMSASLTMRLVPARTVPKALSVIFGAVSIALVIAAPLGSFLGGIIGWRNVFNAAAVMGVLCVIWVVKSLPSLPGEPSHQKQNMFSLLQRPGVMAGMIAIFMSFAGQFAFFTYIRPVYMNLAGFDVDGLTLVLLSFGIASFVGTSFSSYVLKRSVKLALAGAPLLLALSALTLIVWGSDKTVAAAIAIIWGLAFALVPVGWSTWITRSLADQAEKAGSIQVAVIQLANTCGAAVGGYALDNFGLLSPLALSGGLMLLTALVVAAKVRITPMS</sequence>
<dbReference type="EMBL" id="AE017220">
    <property type="status" value="NOT_ANNOTATED_CDS"/>
    <property type="molecule type" value="Genomic_DNA"/>
</dbReference>
<dbReference type="SMR" id="P0C566"/>
<dbReference type="Proteomes" id="UP000000538">
    <property type="component" value="Chromosome"/>
</dbReference>
<dbReference type="GO" id="GO:0005886">
    <property type="term" value="C:plasma membrane"/>
    <property type="evidence" value="ECO:0007669"/>
    <property type="project" value="UniProtKB-SubCell"/>
</dbReference>
<dbReference type="GO" id="GO:0015297">
    <property type="term" value="F:antiporter activity"/>
    <property type="evidence" value="ECO:0007669"/>
    <property type="project" value="UniProtKB-KW"/>
</dbReference>
<dbReference type="GO" id="GO:0015211">
    <property type="term" value="F:purine nucleoside transmembrane transporter activity"/>
    <property type="evidence" value="ECO:0007669"/>
    <property type="project" value="UniProtKB-UniRule"/>
</dbReference>
<dbReference type="CDD" id="cd17324">
    <property type="entry name" value="MFS_NepI_like"/>
    <property type="match status" value="1"/>
</dbReference>
<dbReference type="FunFam" id="1.20.1250.20:FF:000113">
    <property type="entry name" value="Purine ribonucleoside efflux pump NepI"/>
    <property type="match status" value="1"/>
</dbReference>
<dbReference type="Gene3D" id="1.20.1250.20">
    <property type="entry name" value="MFS general substrate transporter like domains"/>
    <property type="match status" value="1"/>
</dbReference>
<dbReference type="HAMAP" id="MF_01189">
    <property type="entry name" value="MFS_NepI"/>
    <property type="match status" value="1"/>
</dbReference>
<dbReference type="InterPro" id="IPR011701">
    <property type="entry name" value="MFS"/>
</dbReference>
<dbReference type="InterPro" id="IPR020846">
    <property type="entry name" value="MFS_dom"/>
</dbReference>
<dbReference type="InterPro" id="IPR050189">
    <property type="entry name" value="MFS_Efflux_Transporters"/>
</dbReference>
<dbReference type="InterPro" id="IPR023680">
    <property type="entry name" value="MFS_NepI"/>
</dbReference>
<dbReference type="InterPro" id="IPR036259">
    <property type="entry name" value="MFS_trans_sf"/>
</dbReference>
<dbReference type="NCBIfam" id="NF007578">
    <property type="entry name" value="PRK10213.1"/>
    <property type="match status" value="1"/>
</dbReference>
<dbReference type="PANTHER" id="PTHR43124">
    <property type="entry name" value="PURINE EFFLUX PUMP PBUE"/>
    <property type="match status" value="1"/>
</dbReference>
<dbReference type="PANTHER" id="PTHR43124:SF5">
    <property type="entry name" value="PURINE RIBONUCLEOSIDE EFFLUX PUMP NEPI"/>
    <property type="match status" value="1"/>
</dbReference>
<dbReference type="Pfam" id="PF07690">
    <property type="entry name" value="MFS_1"/>
    <property type="match status" value="1"/>
</dbReference>
<dbReference type="SUPFAM" id="SSF103473">
    <property type="entry name" value="MFS general substrate transporter"/>
    <property type="match status" value="1"/>
</dbReference>
<dbReference type="PROSITE" id="PS50850">
    <property type="entry name" value="MFS"/>
    <property type="match status" value="1"/>
</dbReference>
<accession>P0C566</accession>